<dbReference type="EMBL" id="CP000738">
    <property type="protein sequence ID" value="ABR59307.1"/>
    <property type="molecule type" value="Genomic_DNA"/>
</dbReference>
<dbReference type="RefSeq" id="WP_011974653.1">
    <property type="nucleotide sequence ID" value="NC_009636.1"/>
</dbReference>
<dbReference type="RefSeq" id="YP_001326142.1">
    <property type="nucleotide sequence ID" value="NC_009636.1"/>
</dbReference>
<dbReference type="SMR" id="A6U6M7"/>
<dbReference type="STRING" id="366394.Smed_0450"/>
<dbReference type="KEGG" id="smd:Smed_0450"/>
<dbReference type="PATRIC" id="fig|366394.8.peg.3534"/>
<dbReference type="eggNOG" id="COG0711">
    <property type="taxonomic scope" value="Bacteria"/>
</dbReference>
<dbReference type="HOGENOM" id="CLU_079215_6_1_5"/>
<dbReference type="OrthoDB" id="8479836at2"/>
<dbReference type="Proteomes" id="UP000001108">
    <property type="component" value="Chromosome"/>
</dbReference>
<dbReference type="GO" id="GO:0005886">
    <property type="term" value="C:plasma membrane"/>
    <property type="evidence" value="ECO:0007669"/>
    <property type="project" value="UniProtKB-SubCell"/>
</dbReference>
<dbReference type="GO" id="GO:0045259">
    <property type="term" value="C:proton-transporting ATP synthase complex"/>
    <property type="evidence" value="ECO:0007669"/>
    <property type="project" value="UniProtKB-KW"/>
</dbReference>
<dbReference type="GO" id="GO:0046933">
    <property type="term" value="F:proton-transporting ATP synthase activity, rotational mechanism"/>
    <property type="evidence" value="ECO:0007669"/>
    <property type="project" value="UniProtKB-UniRule"/>
</dbReference>
<dbReference type="GO" id="GO:0046961">
    <property type="term" value="F:proton-transporting ATPase activity, rotational mechanism"/>
    <property type="evidence" value="ECO:0007669"/>
    <property type="project" value="TreeGrafter"/>
</dbReference>
<dbReference type="CDD" id="cd06503">
    <property type="entry name" value="ATP-synt_Fo_b"/>
    <property type="match status" value="1"/>
</dbReference>
<dbReference type="HAMAP" id="MF_01398">
    <property type="entry name" value="ATP_synth_b_bprime"/>
    <property type="match status" value="1"/>
</dbReference>
<dbReference type="InterPro" id="IPR002146">
    <property type="entry name" value="ATP_synth_b/b'su_bac/chlpt"/>
</dbReference>
<dbReference type="InterPro" id="IPR050059">
    <property type="entry name" value="ATP_synthase_B_chain"/>
</dbReference>
<dbReference type="NCBIfam" id="NF006611">
    <property type="entry name" value="PRK09173.1"/>
    <property type="match status" value="1"/>
</dbReference>
<dbReference type="PANTHER" id="PTHR33445:SF1">
    <property type="entry name" value="ATP SYNTHASE SUBUNIT B"/>
    <property type="match status" value="1"/>
</dbReference>
<dbReference type="PANTHER" id="PTHR33445">
    <property type="entry name" value="ATP SYNTHASE SUBUNIT B', CHLOROPLASTIC"/>
    <property type="match status" value="1"/>
</dbReference>
<dbReference type="Pfam" id="PF00430">
    <property type="entry name" value="ATP-synt_B"/>
    <property type="match status" value="1"/>
</dbReference>
<feature type="chain" id="PRO_0000368777" description="ATP synthase subunit b 1">
    <location>
        <begin position="1"/>
        <end position="161"/>
    </location>
</feature>
<feature type="transmembrane region" description="Helical" evidence="1">
    <location>
        <begin position="3"/>
        <end position="23"/>
    </location>
</feature>
<accession>A6U6M7</accession>
<proteinExistence type="inferred from homology"/>
<organism>
    <name type="scientific">Sinorhizobium medicae (strain WSM419)</name>
    <name type="common">Ensifer medicae</name>
    <dbReference type="NCBI Taxonomy" id="366394"/>
    <lineage>
        <taxon>Bacteria</taxon>
        <taxon>Pseudomonadati</taxon>
        <taxon>Pseudomonadota</taxon>
        <taxon>Alphaproteobacteria</taxon>
        <taxon>Hyphomicrobiales</taxon>
        <taxon>Rhizobiaceae</taxon>
        <taxon>Sinorhizobium/Ensifer group</taxon>
        <taxon>Sinorhizobium</taxon>
    </lineage>
</organism>
<gene>
    <name evidence="1" type="primary">atpF1</name>
    <name type="ordered locus">Smed_0450</name>
</gene>
<reference key="1">
    <citation type="submission" date="2007-06" db="EMBL/GenBank/DDBJ databases">
        <title>Complete sequence of Sinorhizobium medicae WSM419 chromosome.</title>
        <authorList>
            <consortium name="US DOE Joint Genome Institute"/>
            <person name="Copeland A."/>
            <person name="Lucas S."/>
            <person name="Lapidus A."/>
            <person name="Barry K."/>
            <person name="Glavina del Rio T."/>
            <person name="Dalin E."/>
            <person name="Tice H."/>
            <person name="Pitluck S."/>
            <person name="Chain P."/>
            <person name="Malfatti S."/>
            <person name="Shin M."/>
            <person name="Vergez L."/>
            <person name="Schmutz J."/>
            <person name="Larimer F."/>
            <person name="Land M."/>
            <person name="Hauser L."/>
            <person name="Kyrpides N."/>
            <person name="Mikhailova N."/>
            <person name="Reeve W.G."/>
            <person name="Richardson P."/>
        </authorList>
    </citation>
    <scope>NUCLEOTIDE SEQUENCE [LARGE SCALE GENOMIC DNA]</scope>
    <source>
        <strain>WSM419</strain>
    </source>
</reference>
<evidence type="ECO:0000255" key="1">
    <source>
        <dbReference type="HAMAP-Rule" id="MF_01398"/>
    </source>
</evidence>
<comment type="function">
    <text evidence="1">F(1)F(0) ATP synthase produces ATP from ADP in the presence of a proton or sodium gradient. F-type ATPases consist of two structural domains, F(1) containing the extramembraneous catalytic core and F(0) containing the membrane proton channel, linked together by a central stalk and a peripheral stalk. During catalysis, ATP synthesis in the catalytic domain of F(1) is coupled via a rotary mechanism of the central stalk subunits to proton translocation.</text>
</comment>
<comment type="function">
    <text evidence="1">Component of the F(0) channel, it forms part of the peripheral stalk, linking F(1) to F(0).</text>
</comment>
<comment type="subunit">
    <text evidence="1">F-type ATPases have 2 components, F(1) - the catalytic core - and F(0) - the membrane proton channel. F(1) has five subunits: alpha(3), beta(3), gamma(1), delta(1), epsilon(1). F(0) has three main subunits: a(1), b(2) and c(10-14). The alpha and beta chains form an alternating ring which encloses part of the gamma chain. F(1) is attached to F(0) by a central stalk formed by the gamma and epsilon chains, while a peripheral stalk is formed by the delta and b chains.</text>
</comment>
<comment type="subcellular location">
    <subcellularLocation>
        <location evidence="1">Cell inner membrane</location>
        <topology evidence="1">Single-pass membrane protein</topology>
    </subcellularLocation>
</comment>
<comment type="similarity">
    <text evidence="1">Belongs to the ATPase B chain family.</text>
</comment>
<sequence>MALDATFYALVGLILFFVLIAYLKVPGMVGKALDARADKISNELAEAKRLREEAQSLVAEYQRKRKDAEAEAASIVAAAQREAEMLTAEAKQKTEEFVARRTALSEQKIKQAESDAINAVRAAAVDLAISAAEKVIASKADASAQETLFQKALGEVKSRLN</sequence>
<protein>
    <recommendedName>
        <fullName evidence="1">ATP synthase subunit b 1</fullName>
    </recommendedName>
    <alternativeName>
        <fullName evidence="1">ATP synthase F(0) sector subunit b 1</fullName>
    </alternativeName>
    <alternativeName>
        <fullName evidence="1">ATPase subunit I 1</fullName>
    </alternativeName>
    <alternativeName>
        <fullName evidence="1">F-type ATPase subunit b 1</fullName>
        <shortName evidence="1">F-ATPase subunit b 1</shortName>
    </alternativeName>
</protein>
<keyword id="KW-0066">ATP synthesis</keyword>
<keyword id="KW-0997">Cell inner membrane</keyword>
<keyword id="KW-1003">Cell membrane</keyword>
<keyword id="KW-0138">CF(0)</keyword>
<keyword id="KW-0375">Hydrogen ion transport</keyword>
<keyword id="KW-0406">Ion transport</keyword>
<keyword id="KW-0472">Membrane</keyword>
<keyword id="KW-0812">Transmembrane</keyword>
<keyword id="KW-1133">Transmembrane helix</keyword>
<keyword id="KW-0813">Transport</keyword>
<name>ATPF1_SINMW</name>